<reference key="1">
    <citation type="journal article" date="2008" name="J. Bacteriol.">
        <title>Complete genome sequence of uropathogenic Proteus mirabilis, a master of both adherence and motility.</title>
        <authorList>
            <person name="Pearson M.M."/>
            <person name="Sebaihia M."/>
            <person name="Churcher C."/>
            <person name="Quail M.A."/>
            <person name="Seshasayee A.S."/>
            <person name="Luscombe N.M."/>
            <person name="Abdellah Z."/>
            <person name="Arrosmith C."/>
            <person name="Atkin B."/>
            <person name="Chillingworth T."/>
            <person name="Hauser H."/>
            <person name="Jagels K."/>
            <person name="Moule S."/>
            <person name="Mungall K."/>
            <person name="Norbertczak H."/>
            <person name="Rabbinowitsch E."/>
            <person name="Walker D."/>
            <person name="Whithead S."/>
            <person name="Thomson N.R."/>
            <person name="Rather P.N."/>
            <person name="Parkhill J."/>
            <person name="Mobley H.L.T."/>
        </authorList>
    </citation>
    <scope>NUCLEOTIDE SEQUENCE [LARGE SCALE GENOMIC DNA]</scope>
    <source>
        <strain>HI4320</strain>
    </source>
</reference>
<keyword id="KW-0963">Cytoplasm</keyword>
<keyword id="KW-0328">Glycosyltransferase</keyword>
<keyword id="KW-0660">Purine salvage</keyword>
<keyword id="KW-1185">Reference proteome</keyword>
<keyword id="KW-0808">Transferase</keyword>
<evidence type="ECO:0000255" key="1">
    <source>
        <dbReference type="HAMAP-Rule" id="MF_00004"/>
    </source>
</evidence>
<organism>
    <name type="scientific">Proteus mirabilis (strain HI4320)</name>
    <dbReference type="NCBI Taxonomy" id="529507"/>
    <lineage>
        <taxon>Bacteria</taxon>
        <taxon>Pseudomonadati</taxon>
        <taxon>Pseudomonadota</taxon>
        <taxon>Gammaproteobacteria</taxon>
        <taxon>Enterobacterales</taxon>
        <taxon>Morganellaceae</taxon>
        <taxon>Proteus</taxon>
    </lineage>
</organism>
<accession>B4EU76</accession>
<proteinExistence type="inferred from homology"/>
<protein>
    <recommendedName>
        <fullName evidence="1">Adenine phosphoribosyltransferase</fullName>
        <shortName evidence="1">APRT</shortName>
        <ecNumber evidence="1">2.4.2.7</ecNumber>
    </recommendedName>
</protein>
<name>APT_PROMH</name>
<dbReference type="EC" id="2.4.2.7" evidence="1"/>
<dbReference type="EMBL" id="AM942759">
    <property type="protein sequence ID" value="CAR40450.1"/>
    <property type="molecule type" value="Genomic_DNA"/>
</dbReference>
<dbReference type="RefSeq" id="WP_012367485.1">
    <property type="nucleotide sequence ID" value="NC_010554.1"/>
</dbReference>
<dbReference type="SMR" id="B4EU76"/>
<dbReference type="EnsemblBacteria" id="CAR40450">
    <property type="protein sequence ID" value="CAR40450"/>
    <property type="gene ID" value="PMI0138"/>
</dbReference>
<dbReference type="GeneID" id="6803638"/>
<dbReference type="KEGG" id="pmr:PMI0138"/>
<dbReference type="eggNOG" id="COG0503">
    <property type="taxonomic scope" value="Bacteria"/>
</dbReference>
<dbReference type="HOGENOM" id="CLU_063339_3_0_6"/>
<dbReference type="UniPathway" id="UPA00588">
    <property type="reaction ID" value="UER00646"/>
</dbReference>
<dbReference type="Proteomes" id="UP000008319">
    <property type="component" value="Chromosome"/>
</dbReference>
<dbReference type="GO" id="GO:0005737">
    <property type="term" value="C:cytoplasm"/>
    <property type="evidence" value="ECO:0007669"/>
    <property type="project" value="UniProtKB-SubCell"/>
</dbReference>
<dbReference type="GO" id="GO:0002055">
    <property type="term" value="F:adenine binding"/>
    <property type="evidence" value="ECO:0007669"/>
    <property type="project" value="TreeGrafter"/>
</dbReference>
<dbReference type="GO" id="GO:0003999">
    <property type="term" value="F:adenine phosphoribosyltransferase activity"/>
    <property type="evidence" value="ECO:0007669"/>
    <property type="project" value="UniProtKB-UniRule"/>
</dbReference>
<dbReference type="GO" id="GO:0016208">
    <property type="term" value="F:AMP binding"/>
    <property type="evidence" value="ECO:0007669"/>
    <property type="project" value="TreeGrafter"/>
</dbReference>
<dbReference type="GO" id="GO:0006168">
    <property type="term" value="P:adenine salvage"/>
    <property type="evidence" value="ECO:0007669"/>
    <property type="project" value="InterPro"/>
</dbReference>
<dbReference type="GO" id="GO:0044209">
    <property type="term" value="P:AMP salvage"/>
    <property type="evidence" value="ECO:0007669"/>
    <property type="project" value="UniProtKB-UniRule"/>
</dbReference>
<dbReference type="GO" id="GO:0006166">
    <property type="term" value="P:purine ribonucleoside salvage"/>
    <property type="evidence" value="ECO:0007669"/>
    <property type="project" value="UniProtKB-KW"/>
</dbReference>
<dbReference type="CDD" id="cd06223">
    <property type="entry name" value="PRTases_typeI"/>
    <property type="match status" value="1"/>
</dbReference>
<dbReference type="FunFam" id="3.40.50.2020:FF:000004">
    <property type="entry name" value="Adenine phosphoribosyltransferase"/>
    <property type="match status" value="1"/>
</dbReference>
<dbReference type="Gene3D" id="3.40.50.2020">
    <property type="match status" value="1"/>
</dbReference>
<dbReference type="HAMAP" id="MF_00004">
    <property type="entry name" value="Aden_phosphoribosyltr"/>
    <property type="match status" value="1"/>
</dbReference>
<dbReference type="InterPro" id="IPR005764">
    <property type="entry name" value="Ade_phspho_trans"/>
</dbReference>
<dbReference type="InterPro" id="IPR000836">
    <property type="entry name" value="PRibTrfase_dom"/>
</dbReference>
<dbReference type="InterPro" id="IPR029057">
    <property type="entry name" value="PRTase-like"/>
</dbReference>
<dbReference type="InterPro" id="IPR050054">
    <property type="entry name" value="UPRTase/APRTase"/>
</dbReference>
<dbReference type="NCBIfam" id="TIGR01090">
    <property type="entry name" value="apt"/>
    <property type="match status" value="1"/>
</dbReference>
<dbReference type="NCBIfam" id="NF002632">
    <property type="entry name" value="PRK02304.1-1"/>
    <property type="match status" value="1"/>
</dbReference>
<dbReference type="NCBIfam" id="NF002634">
    <property type="entry name" value="PRK02304.1-3"/>
    <property type="match status" value="1"/>
</dbReference>
<dbReference type="NCBIfam" id="NF002636">
    <property type="entry name" value="PRK02304.1-5"/>
    <property type="match status" value="1"/>
</dbReference>
<dbReference type="PANTHER" id="PTHR32315">
    <property type="entry name" value="ADENINE PHOSPHORIBOSYLTRANSFERASE"/>
    <property type="match status" value="1"/>
</dbReference>
<dbReference type="PANTHER" id="PTHR32315:SF3">
    <property type="entry name" value="ADENINE PHOSPHORIBOSYLTRANSFERASE"/>
    <property type="match status" value="1"/>
</dbReference>
<dbReference type="Pfam" id="PF00156">
    <property type="entry name" value="Pribosyltran"/>
    <property type="match status" value="1"/>
</dbReference>
<dbReference type="SUPFAM" id="SSF53271">
    <property type="entry name" value="PRTase-like"/>
    <property type="match status" value="1"/>
</dbReference>
<dbReference type="PROSITE" id="PS00103">
    <property type="entry name" value="PUR_PYR_PR_TRANSFER"/>
    <property type="match status" value="1"/>
</dbReference>
<sequence>MTANAQQLQFIKDSIETIPDYPKEGILFRDITTLLDNPAAYQATIDLLVEHYQGQGITKVVGTEARGFLFGAPVALRLGVGFVPVRKKGKLPRETLSETYDLEYGTDTLEIHKDSITDKDKVLMVDDLLATGGTIEATARLIRRLGGTVTEAAFIICLPDLGGIERLEKEGIHSFTLVNFPGH</sequence>
<feature type="chain" id="PRO_1000088993" description="Adenine phosphoribosyltransferase">
    <location>
        <begin position="1"/>
        <end position="183"/>
    </location>
</feature>
<gene>
    <name evidence="1" type="primary">apt</name>
    <name type="ordered locus">PMI0138</name>
</gene>
<comment type="function">
    <text evidence="1">Catalyzes a salvage reaction resulting in the formation of AMP, that is energically less costly than de novo synthesis.</text>
</comment>
<comment type="catalytic activity">
    <reaction evidence="1">
        <text>AMP + diphosphate = 5-phospho-alpha-D-ribose 1-diphosphate + adenine</text>
        <dbReference type="Rhea" id="RHEA:16609"/>
        <dbReference type="ChEBI" id="CHEBI:16708"/>
        <dbReference type="ChEBI" id="CHEBI:33019"/>
        <dbReference type="ChEBI" id="CHEBI:58017"/>
        <dbReference type="ChEBI" id="CHEBI:456215"/>
        <dbReference type="EC" id="2.4.2.7"/>
    </reaction>
</comment>
<comment type="pathway">
    <text evidence="1">Purine metabolism; AMP biosynthesis via salvage pathway; AMP from adenine: step 1/1.</text>
</comment>
<comment type="subunit">
    <text evidence="1">Homodimer.</text>
</comment>
<comment type="subcellular location">
    <subcellularLocation>
        <location evidence="1">Cytoplasm</location>
    </subcellularLocation>
</comment>
<comment type="similarity">
    <text evidence="1">Belongs to the purine/pyrimidine phosphoribosyltransferase family.</text>
</comment>